<protein>
    <recommendedName>
        <fullName evidence="1">RNA pyrophosphohydrolase</fullName>
        <ecNumber evidence="1">3.6.1.-</ecNumber>
    </recommendedName>
    <alternativeName>
        <fullName evidence="1">(Di)nucleoside polyphosphate hydrolase</fullName>
    </alternativeName>
</protein>
<proteinExistence type="inferred from homology"/>
<feature type="chain" id="PRO_0000231906" description="RNA pyrophosphohydrolase">
    <location>
        <begin position="1"/>
        <end position="182"/>
    </location>
</feature>
<feature type="domain" description="Nudix hydrolase" evidence="1">
    <location>
        <begin position="6"/>
        <end position="149"/>
    </location>
</feature>
<feature type="region of interest" description="Disordered" evidence="2">
    <location>
        <begin position="162"/>
        <end position="182"/>
    </location>
</feature>
<feature type="short sequence motif" description="Nudix box">
    <location>
        <begin position="38"/>
        <end position="59"/>
    </location>
</feature>
<comment type="function">
    <text evidence="1">Accelerates the degradation of transcripts by removing pyrophosphate from the 5'-end of triphosphorylated RNA, leading to a more labile monophosphorylated state that can stimulate subsequent ribonuclease cleavage.</text>
</comment>
<comment type="cofactor">
    <cofactor evidence="1">
        <name>a divalent metal cation</name>
        <dbReference type="ChEBI" id="CHEBI:60240"/>
    </cofactor>
</comment>
<comment type="similarity">
    <text evidence="1">Belongs to the Nudix hydrolase family. RppH subfamily.</text>
</comment>
<reference key="1">
    <citation type="journal article" date="2009" name="BMC Genomics">
        <title>Metabolic analysis of the soil microbe Dechloromonas aromatica str. RCB: indications of a surprisingly complex life-style and cryptic anaerobic pathways for aromatic degradation.</title>
        <authorList>
            <person name="Salinero K.K."/>
            <person name="Keller K."/>
            <person name="Feil W.S."/>
            <person name="Feil H."/>
            <person name="Trong S."/>
            <person name="Di Bartolo G."/>
            <person name="Lapidus A."/>
        </authorList>
    </citation>
    <scope>NUCLEOTIDE SEQUENCE [LARGE SCALE GENOMIC DNA]</scope>
    <source>
        <strain>RCB</strain>
    </source>
</reference>
<sequence>MLDREGYRPNVGIILCNGRNEVFWGKRIREHSWQFPQGGIKRGETPEEAMFRELYEEVGLLPEHVRILGRTKGWLRYEVPTHWIKREWRGSYKGQKQIWFLLRLVGRDSDVNLRATNKPEFDAWRWNDYWVPLDAVIEFKRLVYEQALNELVRFLDFDRKGPRHKKEQEPFSDVVDSVRSEE</sequence>
<dbReference type="EC" id="3.6.1.-" evidence="1"/>
<dbReference type="EMBL" id="CP000089">
    <property type="protein sequence ID" value="AAZ45402.1"/>
    <property type="molecule type" value="Genomic_DNA"/>
</dbReference>
<dbReference type="SMR" id="Q47IC9"/>
<dbReference type="STRING" id="159087.Daro_0645"/>
<dbReference type="KEGG" id="dar:Daro_0645"/>
<dbReference type="eggNOG" id="COG0494">
    <property type="taxonomic scope" value="Bacteria"/>
</dbReference>
<dbReference type="HOGENOM" id="CLU_087195_3_1_4"/>
<dbReference type="OrthoDB" id="9816040at2"/>
<dbReference type="GO" id="GO:0016462">
    <property type="term" value="F:pyrophosphatase activity"/>
    <property type="evidence" value="ECO:0007669"/>
    <property type="project" value="UniProtKB-ARBA"/>
</dbReference>
<dbReference type="CDD" id="cd03671">
    <property type="entry name" value="NUDIX_Ap4A_hydrolase_plant_like"/>
    <property type="match status" value="1"/>
</dbReference>
<dbReference type="Gene3D" id="3.90.79.10">
    <property type="entry name" value="Nucleoside Triphosphate Pyrophosphohydrolase"/>
    <property type="match status" value="1"/>
</dbReference>
<dbReference type="HAMAP" id="MF_00298">
    <property type="entry name" value="Nudix_RppH"/>
    <property type="match status" value="1"/>
</dbReference>
<dbReference type="InterPro" id="IPR020476">
    <property type="entry name" value="Nudix_hydrolase"/>
</dbReference>
<dbReference type="InterPro" id="IPR015797">
    <property type="entry name" value="NUDIX_hydrolase-like_dom_sf"/>
</dbReference>
<dbReference type="InterPro" id="IPR020084">
    <property type="entry name" value="NUDIX_hydrolase_CS"/>
</dbReference>
<dbReference type="InterPro" id="IPR000086">
    <property type="entry name" value="NUDIX_hydrolase_dom"/>
</dbReference>
<dbReference type="InterPro" id="IPR022927">
    <property type="entry name" value="RppH"/>
</dbReference>
<dbReference type="NCBIfam" id="NF001935">
    <property type="entry name" value="PRK00714.1-2"/>
    <property type="match status" value="1"/>
</dbReference>
<dbReference type="NCBIfam" id="NF001937">
    <property type="entry name" value="PRK00714.1-4"/>
    <property type="match status" value="1"/>
</dbReference>
<dbReference type="NCBIfam" id="NF001938">
    <property type="entry name" value="PRK00714.1-5"/>
    <property type="match status" value="1"/>
</dbReference>
<dbReference type="PANTHER" id="PTHR43046">
    <property type="entry name" value="GDP-MANNOSE MANNOSYL HYDROLASE"/>
    <property type="match status" value="1"/>
</dbReference>
<dbReference type="PANTHER" id="PTHR43046:SF14">
    <property type="entry name" value="MUTT_NUDIX FAMILY PROTEIN"/>
    <property type="match status" value="1"/>
</dbReference>
<dbReference type="Pfam" id="PF00293">
    <property type="entry name" value="NUDIX"/>
    <property type="match status" value="1"/>
</dbReference>
<dbReference type="PRINTS" id="PR00502">
    <property type="entry name" value="NUDIXFAMILY"/>
</dbReference>
<dbReference type="SUPFAM" id="SSF55811">
    <property type="entry name" value="Nudix"/>
    <property type="match status" value="1"/>
</dbReference>
<dbReference type="PROSITE" id="PS51462">
    <property type="entry name" value="NUDIX"/>
    <property type="match status" value="1"/>
</dbReference>
<dbReference type="PROSITE" id="PS00893">
    <property type="entry name" value="NUDIX_BOX"/>
    <property type="match status" value="1"/>
</dbReference>
<organism>
    <name type="scientific">Dechloromonas aromatica (strain RCB)</name>
    <dbReference type="NCBI Taxonomy" id="159087"/>
    <lineage>
        <taxon>Bacteria</taxon>
        <taxon>Pseudomonadati</taxon>
        <taxon>Pseudomonadota</taxon>
        <taxon>Betaproteobacteria</taxon>
        <taxon>Rhodocyclales</taxon>
        <taxon>Azonexaceae</taxon>
        <taxon>Dechloromonas</taxon>
    </lineage>
</organism>
<accession>Q47IC9</accession>
<keyword id="KW-0378">Hydrolase</keyword>
<evidence type="ECO:0000255" key="1">
    <source>
        <dbReference type="HAMAP-Rule" id="MF_00298"/>
    </source>
</evidence>
<evidence type="ECO:0000256" key="2">
    <source>
        <dbReference type="SAM" id="MobiDB-lite"/>
    </source>
</evidence>
<name>RPPH_DECAR</name>
<gene>
    <name evidence="1" type="primary">rppH</name>
    <name evidence="1" type="synonym">nudH</name>
    <name type="ordered locus">Daro_0645</name>
</gene>